<dbReference type="EC" id="2.5.1.7" evidence="1"/>
<dbReference type="EMBL" id="CP000029">
    <property type="protein sequence ID" value="AAW55053.1"/>
    <property type="molecule type" value="Genomic_DNA"/>
</dbReference>
<dbReference type="RefSeq" id="WP_001829922.1">
    <property type="nucleotide sequence ID" value="NC_002976.3"/>
</dbReference>
<dbReference type="SMR" id="Q5HM98"/>
<dbReference type="STRING" id="176279.SERP1731"/>
<dbReference type="KEGG" id="ser:SERP1731"/>
<dbReference type="eggNOG" id="COG0766">
    <property type="taxonomic scope" value="Bacteria"/>
</dbReference>
<dbReference type="HOGENOM" id="CLU_027387_0_0_9"/>
<dbReference type="UniPathway" id="UPA00219"/>
<dbReference type="Proteomes" id="UP000000531">
    <property type="component" value="Chromosome"/>
</dbReference>
<dbReference type="GO" id="GO:0005737">
    <property type="term" value="C:cytoplasm"/>
    <property type="evidence" value="ECO:0007669"/>
    <property type="project" value="UniProtKB-SubCell"/>
</dbReference>
<dbReference type="GO" id="GO:0008760">
    <property type="term" value="F:UDP-N-acetylglucosamine 1-carboxyvinyltransferase activity"/>
    <property type="evidence" value="ECO:0007669"/>
    <property type="project" value="UniProtKB-UniRule"/>
</dbReference>
<dbReference type="GO" id="GO:0051301">
    <property type="term" value="P:cell division"/>
    <property type="evidence" value="ECO:0007669"/>
    <property type="project" value="UniProtKB-KW"/>
</dbReference>
<dbReference type="GO" id="GO:0071555">
    <property type="term" value="P:cell wall organization"/>
    <property type="evidence" value="ECO:0007669"/>
    <property type="project" value="UniProtKB-KW"/>
</dbReference>
<dbReference type="GO" id="GO:0009252">
    <property type="term" value="P:peptidoglycan biosynthetic process"/>
    <property type="evidence" value="ECO:0007669"/>
    <property type="project" value="UniProtKB-UniRule"/>
</dbReference>
<dbReference type="GO" id="GO:0008360">
    <property type="term" value="P:regulation of cell shape"/>
    <property type="evidence" value="ECO:0007669"/>
    <property type="project" value="UniProtKB-KW"/>
</dbReference>
<dbReference type="GO" id="GO:0019277">
    <property type="term" value="P:UDP-N-acetylgalactosamine biosynthetic process"/>
    <property type="evidence" value="ECO:0007669"/>
    <property type="project" value="InterPro"/>
</dbReference>
<dbReference type="CDD" id="cd01555">
    <property type="entry name" value="UdpNAET"/>
    <property type="match status" value="1"/>
</dbReference>
<dbReference type="FunFam" id="3.65.10.10:FF:000001">
    <property type="entry name" value="UDP-N-acetylglucosamine 1-carboxyvinyltransferase"/>
    <property type="match status" value="1"/>
</dbReference>
<dbReference type="Gene3D" id="3.65.10.10">
    <property type="entry name" value="Enolpyruvate transferase domain"/>
    <property type="match status" value="2"/>
</dbReference>
<dbReference type="HAMAP" id="MF_00111">
    <property type="entry name" value="MurA"/>
    <property type="match status" value="1"/>
</dbReference>
<dbReference type="InterPro" id="IPR001986">
    <property type="entry name" value="Enolpyruvate_Tfrase_dom"/>
</dbReference>
<dbReference type="InterPro" id="IPR036968">
    <property type="entry name" value="Enolpyruvate_Tfrase_sf"/>
</dbReference>
<dbReference type="InterPro" id="IPR050068">
    <property type="entry name" value="MurA_subfamily"/>
</dbReference>
<dbReference type="InterPro" id="IPR013792">
    <property type="entry name" value="RNA3'P_cycl/enolpyr_Trfase_a/b"/>
</dbReference>
<dbReference type="InterPro" id="IPR005750">
    <property type="entry name" value="UDP_GlcNAc_COvinyl_MurA"/>
</dbReference>
<dbReference type="NCBIfam" id="TIGR01072">
    <property type="entry name" value="murA"/>
    <property type="match status" value="1"/>
</dbReference>
<dbReference type="NCBIfam" id="NF006873">
    <property type="entry name" value="PRK09369.1"/>
    <property type="match status" value="1"/>
</dbReference>
<dbReference type="NCBIfam" id="NF009470">
    <property type="entry name" value="PRK12830.1"/>
    <property type="match status" value="1"/>
</dbReference>
<dbReference type="PANTHER" id="PTHR43783">
    <property type="entry name" value="UDP-N-ACETYLGLUCOSAMINE 1-CARBOXYVINYLTRANSFERASE"/>
    <property type="match status" value="1"/>
</dbReference>
<dbReference type="PANTHER" id="PTHR43783:SF2">
    <property type="entry name" value="UDP-N-ACETYLGLUCOSAMINE 1-CARBOXYVINYLTRANSFERASE 2"/>
    <property type="match status" value="1"/>
</dbReference>
<dbReference type="Pfam" id="PF00275">
    <property type="entry name" value="EPSP_synthase"/>
    <property type="match status" value="1"/>
</dbReference>
<dbReference type="SUPFAM" id="SSF55205">
    <property type="entry name" value="EPT/RTPC-like"/>
    <property type="match status" value="1"/>
</dbReference>
<sequence length="419" mass="45230">MAQEVIKIRGGQALKGEVEISGAKNSAVAIIPATLLAQGQVKLEGLPQISDVETLVSLLEDLNIEARLNGKQLEVDTTQIENAPLPNNKVESLRASYYMMGAMLGRFKKCVIGLPGGCPLGPRPIDQHIKGFKALGAEIDESSNTSMKLVAKELRGAHIFLDMVSVGATINIMLAAVHAKGQTVIDNAAKEPEVVDVANFLMSMGADIRGAGTTSIKINGVEELKGSEYQIIPDRIEAGSYMCMAAAMGEEVILHNIVPKHVEALTVKLQELGVDIEIEDEKIIIRKQTPYKNVDIKTLVYPGFATDLQQPITPLLFMTEGPSFVTDTIYPARFKHVEELQRMGANIKSDEGTAVIKPSTLNGAEVYASDLRAGACLITAGLIAEGVTTIFNVKHIYRGYTNIVEHLKALGADIWTETV</sequence>
<organism>
    <name type="scientific">Staphylococcus epidermidis (strain ATCC 35984 / DSM 28319 / BCRC 17069 / CCUG 31568 / BM 3577 / RP62A)</name>
    <dbReference type="NCBI Taxonomy" id="176279"/>
    <lineage>
        <taxon>Bacteria</taxon>
        <taxon>Bacillati</taxon>
        <taxon>Bacillota</taxon>
        <taxon>Bacilli</taxon>
        <taxon>Bacillales</taxon>
        <taxon>Staphylococcaceae</taxon>
        <taxon>Staphylococcus</taxon>
    </lineage>
</organism>
<reference key="1">
    <citation type="journal article" date="2005" name="J. Bacteriol.">
        <title>Insights on evolution of virulence and resistance from the complete genome analysis of an early methicillin-resistant Staphylococcus aureus strain and a biofilm-producing methicillin-resistant Staphylococcus epidermidis strain.</title>
        <authorList>
            <person name="Gill S.R."/>
            <person name="Fouts D.E."/>
            <person name="Archer G.L."/>
            <person name="Mongodin E.F."/>
            <person name="DeBoy R.T."/>
            <person name="Ravel J."/>
            <person name="Paulsen I.T."/>
            <person name="Kolonay J.F."/>
            <person name="Brinkac L.M."/>
            <person name="Beanan M.J."/>
            <person name="Dodson R.J."/>
            <person name="Daugherty S.C."/>
            <person name="Madupu R."/>
            <person name="Angiuoli S.V."/>
            <person name="Durkin A.S."/>
            <person name="Haft D.H."/>
            <person name="Vamathevan J.J."/>
            <person name="Khouri H."/>
            <person name="Utterback T.R."/>
            <person name="Lee C."/>
            <person name="Dimitrov G."/>
            <person name="Jiang L."/>
            <person name="Qin H."/>
            <person name="Weidman J."/>
            <person name="Tran K."/>
            <person name="Kang K.H."/>
            <person name="Hance I.R."/>
            <person name="Nelson K.E."/>
            <person name="Fraser C.M."/>
        </authorList>
    </citation>
    <scope>NUCLEOTIDE SEQUENCE [LARGE SCALE GENOMIC DNA]</scope>
    <source>
        <strain>ATCC 35984 / DSM 28319 / BCRC 17069 / CCUG 31568 / BM 3577 / RP62A</strain>
    </source>
</reference>
<feature type="chain" id="PRO_0000178929" description="UDP-N-acetylglucosamine 1-carboxyvinyltransferase 2">
    <location>
        <begin position="1"/>
        <end position="419"/>
    </location>
</feature>
<feature type="active site" description="Proton donor" evidence="1">
    <location>
        <position position="118"/>
    </location>
</feature>
<feature type="binding site" evidence="1">
    <location>
        <begin position="24"/>
        <end position="25"/>
    </location>
    <ligand>
        <name>phosphoenolpyruvate</name>
        <dbReference type="ChEBI" id="CHEBI:58702"/>
    </ligand>
</feature>
<feature type="binding site" evidence="1">
    <location>
        <position position="94"/>
    </location>
    <ligand>
        <name>UDP-N-acetyl-alpha-D-glucosamine</name>
        <dbReference type="ChEBI" id="CHEBI:57705"/>
    </ligand>
</feature>
<feature type="binding site" evidence="1">
    <location>
        <begin position="123"/>
        <end position="127"/>
    </location>
    <ligand>
        <name>UDP-N-acetyl-alpha-D-glucosamine</name>
        <dbReference type="ChEBI" id="CHEBI:57705"/>
    </ligand>
</feature>
<feature type="binding site" evidence="1">
    <location>
        <position position="307"/>
    </location>
    <ligand>
        <name>UDP-N-acetyl-alpha-D-glucosamine</name>
        <dbReference type="ChEBI" id="CHEBI:57705"/>
    </ligand>
</feature>
<feature type="binding site" evidence="1">
    <location>
        <position position="329"/>
    </location>
    <ligand>
        <name>UDP-N-acetyl-alpha-D-glucosamine</name>
        <dbReference type="ChEBI" id="CHEBI:57705"/>
    </ligand>
</feature>
<feature type="modified residue" description="2-(S-cysteinyl)pyruvic acid O-phosphothioketal" evidence="1">
    <location>
        <position position="118"/>
    </location>
</feature>
<name>MURA2_STAEQ</name>
<protein>
    <recommendedName>
        <fullName evidence="1">UDP-N-acetylglucosamine 1-carboxyvinyltransferase 2</fullName>
        <ecNumber evidence="1">2.5.1.7</ecNumber>
    </recommendedName>
    <alternativeName>
        <fullName evidence="1">Enoylpyruvate transferase 2</fullName>
    </alternativeName>
    <alternativeName>
        <fullName evidence="1">UDP-N-acetylglucosamine enolpyruvyl transferase 2</fullName>
        <shortName evidence="1">EPT 2</shortName>
    </alternativeName>
</protein>
<keyword id="KW-0131">Cell cycle</keyword>
<keyword id="KW-0132">Cell division</keyword>
<keyword id="KW-0133">Cell shape</keyword>
<keyword id="KW-0961">Cell wall biogenesis/degradation</keyword>
<keyword id="KW-0963">Cytoplasm</keyword>
<keyword id="KW-0573">Peptidoglycan synthesis</keyword>
<keyword id="KW-0670">Pyruvate</keyword>
<keyword id="KW-1185">Reference proteome</keyword>
<keyword id="KW-0808">Transferase</keyword>
<evidence type="ECO:0000255" key="1">
    <source>
        <dbReference type="HAMAP-Rule" id="MF_00111"/>
    </source>
</evidence>
<gene>
    <name evidence="1" type="primary">murA2</name>
    <name type="synonym">murZ</name>
    <name type="ordered locus">SERP1731</name>
</gene>
<proteinExistence type="inferred from homology"/>
<comment type="function">
    <text evidence="1">Cell wall formation. Adds enolpyruvyl to UDP-N-acetylglucosamine.</text>
</comment>
<comment type="catalytic activity">
    <reaction evidence="1">
        <text>phosphoenolpyruvate + UDP-N-acetyl-alpha-D-glucosamine = UDP-N-acetyl-3-O-(1-carboxyvinyl)-alpha-D-glucosamine + phosphate</text>
        <dbReference type="Rhea" id="RHEA:18681"/>
        <dbReference type="ChEBI" id="CHEBI:43474"/>
        <dbReference type="ChEBI" id="CHEBI:57705"/>
        <dbReference type="ChEBI" id="CHEBI:58702"/>
        <dbReference type="ChEBI" id="CHEBI:68483"/>
        <dbReference type="EC" id="2.5.1.7"/>
    </reaction>
</comment>
<comment type="pathway">
    <text evidence="1">Cell wall biogenesis; peptidoglycan biosynthesis.</text>
</comment>
<comment type="subcellular location">
    <subcellularLocation>
        <location evidence="1">Cytoplasm</location>
    </subcellularLocation>
</comment>
<comment type="similarity">
    <text evidence="1">Belongs to the EPSP synthase family. MurA subfamily.</text>
</comment>
<accession>Q5HM98</accession>